<name>ACCD_LACLA</name>
<keyword id="KW-0067">ATP-binding</keyword>
<keyword id="KW-0963">Cytoplasm</keyword>
<keyword id="KW-0275">Fatty acid biosynthesis</keyword>
<keyword id="KW-0276">Fatty acid metabolism</keyword>
<keyword id="KW-0444">Lipid biosynthesis</keyword>
<keyword id="KW-0443">Lipid metabolism</keyword>
<keyword id="KW-0479">Metal-binding</keyword>
<keyword id="KW-0547">Nucleotide-binding</keyword>
<keyword id="KW-1185">Reference proteome</keyword>
<keyword id="KW-0808">Transferase</keyword>
<keyword id="KW-0862">Zinc</keyword>
<keyword id="KW-0863">Zinc-finger</keyword>
<sequence length="288" mass="31770">MALFQKKKYIKINPNRSIIEKQAEQPEVPDELFAKCPACKHTIYQKDLGKNKVCPNCDYNFRITAKERLAIVADKDSFVEMFTGIESKNPLDFPGYPEKLAATKARTGLDEAVITGTATIKGQKTALAIMDSTFIMASMGTVVGEKLTRLFEYATTEKLPIIVFTASGGARMQEGIMSLMQMAKTSAAVKRHSNAGLFYITVLTDPTTGGVTASFASLGDIILAEPQSLIGFAGRRVIEQTVRQTLPDDFQKAEFLLNHGFVDAIVKRTELRQKLALLLELHTEVENV</sequence>
<reference key="1">
    <citation type="journal article" date="2001" name="Genome Res.">
        <title>The complete genome sequence of the lactic acid bacterium Lactococcus lactis ssp. lactis IL1403.</title>
        <authorList>
            <person name="Bolotin A."/>
            <person name="Wincker P."/>
            <person name="Mauger S."/>
            <person name="Jaillon O."/>
            <person name="Malarme K."/>
            <person name="Weissenbach J."/>
            <person name="Ehrlich S.D."/>
            <person name="Sorokin A."/>
        </authorList>
    </citation>
    <scope>NUCLEOTIDE SEQUENCE [LARGE SCALE GENOMIC DNA]</scope>
    <source>
        <strain>IL1403</strain>
    </source>
</reference>
<feature type="chain" id="PRO_0000389777" description="Acetyl-coenzyme A carboxylase carboxyl transferase subunit beta">
    <location>
        <begin position="1"/>
        <end position="288"/>
    </location>
</feature>
<feature type="domain" description="CoA carboxyltransferase N-terminal" evidence="2">
    <location>
        <begin position="32"/>
        <end position="288"/>
    </location>
</feature>
<feature type="zinc finger region" description="C4-type" evidence="1">
    <location>
        <begin position="36"/>
        <end position="57"/>
    </location>
</feature>
<feature type="binding site" evidence="1">
    <location>
        <position position="36"/>
    </location>
    <ligand>
        <name>Zn(2+)</name>
        <dbReference type="ChEBI" id="CHEBI:29105"/>
    </ligand>
</feature>
<feature type="binding site" evidence="1">
    <location>
        <position position="39"/>
    </location>
    <ligand>
        <name>Zn(2+)</name>
        <dbReference type="ChEBI" id="CHEBI:29105"/>
    </ligand>
</feature>
<feature type="binding site" evidence="1">
    <location>
        <position position="54"/>
    </location>
    <ligand>
        <name>Zn(2+)</name>
        <dbReference type="ChEBI" id="CHEBI:29105"/>
    </ligand>
</feature>
<feature type="binding site" evidence="1">
    <location>
        <position position="57"/>
    </location>
    <ligand>
        <name>Zn(2+)</name>
        <dbReference type="ChEBI" id="CHEBI:29105"/>
    </ligand>
</feature>
<proteinExistence type="inferred from homology"/>
<gene>
    <name evidence="1" type="primary">accD</name>
    <name type="ordered locus">LL0779</name>
    <name type="ORF">L018</name>
    <name type="ORF">L0180</name>
</gene>
<protein>
    <recommendedName>
        <fullName evidence="1">Acetyl-coenzyme A carboxylase carboxyl transferase subunit beta</fullName>
        <shortName evidence="1">ACCase subunit beta</shortName>
        <shortName evidence="1">Acetyl-CoA carboxylase carboxyltransferase subunit beta</shortName>
        <ecNumber evidence="1">2.1.3.15</ecNumber>
    </recommendedName>
</protein>
<evidence type="ECO:0000255" key="1">
    <source>
        <dbReference type="HAMAP-Rule" id="MF_01395"/>
    </source>
</evidence>
<evidence type="ECO:0000255" key="2">
    <source>
        <dbReference type="PROSITE-ProRule" id="PRU01136"/>
    </source>
</evidence>
<organism>
    <name type="scientific">Lactococcus lactis subsp. lactis (strain IL1403)</name>
    <name type="common">Streptococcus lactis</name>
    <dbReference type="NCBI Taxonomy" id="272623"/>
    <lineage>
        <taxon>Bacteria</taxon>
        <taxon>Bacillati</taxon>
        <taxon>Bacillota</taxon>
        <taxon>Bacilli</taxon>
        <taxon>Lactobacillales</taxon>
        <taxon>Streptococcaceae</taxon>
        <taxon>Lactococcus</taxon>
    </lineage>
</organism>
<accession>Q9CHF2</accession>
<dbReference type="EC" id="2.1.3.15" evidence="1"/>
<dbReference type="EMBL" id="AE005176">
    <property type="protein sequence ID" value="AAK04877.1"/>
    <property type="molecule type" value="Genomic_DNA"/>
</dbReference>
<dbReference type="PIR" id="C86722">
    <property type="entry name" value="C86722"/>
</dbReference>
<dbReference type="RefSeq" id="NP_266935.1">
    <property type="nucleotide sequence ID" value="NC_002662.1"/>
</dbReference>
<dbReference type="RefSeq" id="WP_010905556.1">
    <property type="nucleotide sequence ID" value="NC_002662.1"/>
</dbReference>
<dbReference type="SMR" id="Q9CHF2"/>
<dbReference type="PaxDb" id="272623-L0180"/>
<dbReference type="EnsemblBacteria" id="AAK04877">
    <property type="protein sequence ID" value="AAK04877"/>
    <property type="gene ID" value="L0180"/>
</dbReference>
<dbReference type="KEGG" id="lla:L0180"/>
<dbReference type="PATRIC" id="fig|272623.7.peg.834"/>
<dbReference type="eggNOG" id="COG0777">
    <property type="taxonomic scope" value="Bacteria"/>
</dbReference>
<dbReference type="HOGENOM" id="CLU_015486_1_1_9"/>
<dbReference type="OrthoDB" id="9772975at2"/>
<dbReference type="UniPathway" id="UPA00655">
    <property type="reaction ID" value="UER00711"/>
</dbReference>
<dbReference type="Proteomes" id="UP000002196">
    <property type="component" value="Chromosome"/>
</dbReference>
<dbReference type="GO" id="GO:0009317">
    <property type="term" value="C:acetyl-CoA carboxylase complex"/>
    <property type="evidence" value="ECO:0007669"/>
    <property type="project" value="InterPro"/>
</dbReference>
<dbReference type="GO" id="GO:0003989">
    <property type="term" value="F:acetyl-CoA carboxylase activity"/>
    <property type="evidence" value="ECO:0007669"/>
    <property type="project" value="InterPro"/>
</dbReference>
<dbReference type="GO" id="GO:0005524">
    <property type="term" value="F:ATP binding"/>
    <property type="evidence" value="ECO:0007669"/>
    <property type="project" value="UniProtKB-KW"/>
</dbReference>
<dbReference type="GO" id="GO:0016743">
    <property type="term" value="F:carboxyl- or carbamoyltransferase activity"/>
    <property type="evidence" value="ECO:0007669"/>
    <property type="project" value="UniProtKB-UniRule"/>
</dbReference>
<dbReference type="GO" id="GO:0008270">
    <property type="term" value="F:zinc ion binding"/>
    <property type="evidence" value="ECO:0007669"/>
    <property type="project" value="UniProtKB-UniRule"/>
</dbReference>
<dbReference type="GO" id="GO:0006633">
    <property type="term" value="P:fatty acid biosynthetic process"/>
    <property type="evidence" value="ECO:0007669"/>
    <property type="project" value="UniProtKB-KW"/>
</dbReference>
<dbReference type="GO" id="GO:2001295">
    <property type="term" value="P:malonyl-CoA biosynthetic process"/>
    <property type="evidence" value="ECO:0007669"/>
    <property type="project" value="UniProtKB-UniRule"/>
</dbReference>
<dbReference type="Gene3D" id="3.90.226.10">
    <property type="entry name" value="2-enoyl-CoA Hydratase, Chain A, domain 1"/>
    <property type="match status" value="1"/>
</dbReference>
<dbReference type="HAMAP" id="MF_01395">
    <property type="entry name" value="AcetylCoA_CT_beta"/>
    <property type="match status" value="1"/>
</dbReference>
<dbReference type="InterPro" id="IPR034733">
    <property type="entry name" value="AcCoA_carboxyl_beta"/>
</dbReference>
<dbReference type="InterPro" id="IPR000438">
    <property type="entry name" value="Acetyl_CoA_COase_Trfase_b_su"/>
</dbReference>
<dbReference type="InterPro" id="IPR029045">
    <property type="entry name" value="ClpP/crotonase-like_dom_sf"/>
</dbReference>
<dbReference type="InterPro" id="IPR011762">
    <property type="entry name" value="COA_CT_N"/>
</dbReference>
<dbReference type="InterPro" id="IPR041010">
    <property type="entry name" value="Znf-ACC"/>
</dbReference>
<dbReference type="NCBIfam" id="TIGR00515">
    <property type="entry name" value="accD"/>
    <property type="match status" value="1"/>
</dbReference>
<dbReference type="PANTHER" id="PTHR42995">
    <property type="entry name" value="ACETYL-COENZYME A CARBOXYLASE CARBOXYL TRANSFERASE SUBUNIT BETA, CHLOROPLASTIC"/>
    <property type="match status" value="1"/>
</dbReference>
<dbReference type="PANTHER" id="PTHR42995:SF5">
    <property type="entry name" value="ACETYL-COENZYME A CARBOXYLASE CARBOXYL TRANSFERASE SUBUNIT BETA, CHLOROPLASTIC"/>
    <property type="match status" value="1"/>
</dbReference>
<dbReference type="Pfam" id="PF01039">
    <property type="entry name" value="Carboxyl_trans"/>
    <property type="match status" value="1"/>
</dbReference>
<dbReference type="Pfam" id="PF17848">
    <property type="entry name" value="Zn_ribbon_ACC"/>
    <property type="match status" value="1"/>
</dbReference>
<dbReference type="PRINTS" id="PR01070">
    <property type="entry name" value="ACCCTRFRASEB"/>
</dbReference>
<dbReference type="SUPFAM" id="SSF52096">
    <property type="entry name" value="ClpP/crotonase"/>
    <property type="match status" value="1"/>
</dbReference>
<dbReference type="PROSITE" id="PS50980">
    <property type="entry name" value="COA_CT_NTER"/>
    <property type="match status" value="1"/>
</dbReference>
<comment type="function">
    <text evidence="1">Component of the acetyl coenzyme A carboxylase (ACC) complex. Biotin carboxylase (BC) catalyzes the carboxylation of biotin on its carrier protein (BCCP) and then the CO(2) group is transferred by the transcarboxylase to acetyl-CoA to form malonyl-CoA.</text>
</comment>
<comment type="catalytic activity">
    <reaction evidence="1">
        <text>N(6)-carboxybiotinyl-L-lysyl-[protein] + acetyl-CoA = N(6)-biotinyl-L-lysyl-[protein] + malonyl-CoA</text>
        <dbReference type="Rhea" id="RHEA:54728"/>
        <dbReference type="Rhea" id="RHEA-COMP:10505"/>
        <dbReference type="Rhea" id="RHEA-COMP:10506"/>
        <dbReference type="ChEBI" id="CHEBI:57288"/>
        <dbReference type="ChEBI" id="CHEBI:57384"/>
        <dbReference type="ChEBI" id="CHEBI:83144"/>
        <dbReference type="ChEBI" id="CHEBI:83145"/>
        <dbReference type="EC" id="2.1.3.15"/>
    </reaction>
</comment>
<comment type="cofactor">
    <cofactor evidence="1">
        <name>Zn(2+)</name>
        <dbReference type="ChEBI" id="CHEBI:29105"/>
    </cofactor>
    <text evidence="1">Binds 1 zinc ion per subunit.</text>
</comment>
<comment type="pathway">
    <text evidence="1">Lipid metabolism; malonyl-CoA biosynthesis; malonyl-CoA from acetyl-CoA: step 1/1.</text>
</comment>
<comment type="subunit">
    <text evidence="1">Acetyl-CoA carboxylase is a heterohexamer composed of biotin carboxyl carrier protein (AccB), biotin carboxylase (AccC) and two subunits each of ACCase subunit alpha (AccA) and ACCase subunit beta (AccD).</text>
</comment>
<comment type="subcellular location">
    <subcellularLocation>
        <location evidence="1">Cytoplasm</location>
    </subcellularLocation>
</comment>
<comment type="similarity">
    <text evidence="1">Belongs to the AccD/PCCB family.</text>
</comment>